<proteinExistence type="inferred from homology"/>
<evidence type="ECO:0000255" key="1">
    <source>
        <dbReference type="HAMAP-Rule" id="MF_00972"/>
    </source>
</evidence>
<evidence type="ECO:0000255" key="2">
    <source>
        <dbReference type="PROSITE-ProRule" id="PRU01083"/>
    </source>
</evidence>
<protein>
    <recommendedName>
        <fullName evidence="1">tRNA-specific adenosine deaminase</fullName>
        <ecNumber evidence="1">3.5.4.33</ecNumber>
    </recommendedName>
</protein>
<organism>
    <name type="scientific">Buchnera aphidicola subsp. Schizaphis graminum (strain Sg)</name>
    <dbReference type="NCBI Taxonomy" id="198804"/>
    <lineage>
        <taxon>Bacteria</taxon>
        <taxon>Pseudomonadati</taxon>
        <taxon>Pseudomonadota</taxon>
        <taxon>Gammaproteobacteria</taxon>
        <taxon>Enterobacterales</taxon>
        <taxon>Erwiniaceae</taxon>
        <taxon>Buchnera</taxon>
    </lineage>
</organism>
<reference key="1">
    <citation type="journal article" date="2002" name="Science">
        <title>50 million years of genomic stasis in endosymbiotic bacteria.</title>
        <authorList>
            <person name="Tamas I."/>
            <person name="Klasson L."/>
            <person name="Canbaeck B."/>
            <person name="Naeslund A.K."/>
            <person name="Eriksson A.-S."/>
            <person name="Wernegreen J.J."/>
            <person name="Sandstroem J.P."/>
            <person name="Moran N.A."/>
            <person name="Andersson S.G.E."/>
        </authorList>
    </citation>
    <scope>NUCLEOTIDE SEQUENCE [LARGE SCALE GENOMIC DNA]</scope>
    <source>
        <strain>Sg</strain>
    </source>
</reference>
<comment type="function">
    <text evidence="1">Catalyzes the deamination of adenosine to inosine at the wobble position 34 of tRNA(Arg2).</text>
</comment>
<comment type="catalytic activity">
    <reaction evidence="1">
        <text>adenosine(34) in tRNA + H2O + H(+) = inosine(34) in tRNA + NH4(+)</text>
        <dbReference type="Rhea" id="RHEA:43168"/>
        <dbReference type="Rhea" id="RHEA-COMP:10373"/>
        <dbReference type="Rhea" id="RHEA-COMP:10374"/>
        <dbReference type="ChEBI" id="CHEBI:15377"/>
        <dbReference type="ChEBI" id="CHEBI:15378"/>
        <dbReference type="ChEBI" id="CHEBI:28938"/>
        <dbReference type="ChEBI" id="CHEBI:74411"/>
        <dbReference type="ChEBI" id="CHEBI:82852"/>
        <dbReference type="EC" id="3.5.4.33"/>
    </reaction>
</comment>
<comment type="cofactor">
    <cofactor evidence="1">
        <name>Zn(2+)</name>
        <dbReference type="ChEBI" id="CHEBI:29105"/>
    </cofactor>
    <text evidence="1">Binds 1 zinc ion per subunit.</text>
</comment>
<comment type="subunit">
    <text evidence="1">Homodimer.</text>
</comment>
<comment type="similarity">
    <text evidence="1">Belongs to the cytidine and deoxycytidylate deaminase family.</text>
</comment>
<name>TADA_BUCAP</name>
<feature type="chain" id="PRO_0000171730" description="tRNA-specific adenosine deaminase">
    <location>
        <begin position="1"/>
        <end position="151"/>
    </location>
</feature>
<feature type="domain" description="CMP/dCMP-type deaminase" evidence="2">
    <location>
        <begin position="4"/>
        <end position="122"/>
    </location>
</feature>
<feature type="active site" description="Proton donor" evidence="1">
    <location>
        <position position="57"/>
    </location>
</feature>
<feature type="binding site" evidence="1">
    <location>
        <position position="55"/>
    </location>
    <ligand>
        <name>Zn(2+)</name>
        <dbReference type="ChEBI" id="CHEBI:29105"/>
        <note>catalytic</note>
    </ligand>
</feature>
<feature type="binding site" evidence="1">
    <location>
        <position position="85"/>
    </location>
    <ligand>
        <name>Zn(2+)</name>
        <dbReference type="ChEBI" id="CHEBI:29105"/>
        <note>catalytic</note>
    </ligand>
</feature>
<feature type="binding site" evidence="1">
    <location>
        <position position="88"/>
    </location>
    <ligand>
        <name>Zn(2+)</name>
        <dbReference type="ChEBI" id="CHEBI:29105"/>
        <note>catalytic</note>
    </ligand>
</feature>
<dbReference type="EC" id="3.5.4.33" evidence="1"/>
<dbReference type="EMBL" id="AE013218">
    <property type="protein sequence ID" value="AAM67805.1"/>
    <property type="molecule type" value="Genomic_DNA"/>
</dbReference>
<dbReference type="RefSeq" id="WP_011053772.1">
    <property type="nucleotide sequence ID" value="NC_004061.1"/>
</dbReference>
<dbReference type="SMR" id="Q8K9R4"/>
<dbReference type="STRING" id="198804.BUsg_246"/>
<dbReference type="GeneID" id="93003716"/>
<dbReference type="KEGG" id="bas:BUsg_246"/>
<dbReference type="eggNOG" id="COG0590">
    <property type="taxonomic scope" value="Bacteria"/>
</dbReference>
<dbReference type="HOGENOM" id="CLU_025810_3_0_6"/>
<dbReference type="Proteomes" id="UP000000416">
    <property type="component" value="Chromosome"/>
</dbReference>
<dbReference type="GO" id="GO:0052717">
    <property type="term" value="F:tRNA-specific adenosine-34 deaminase activity"/>
    <property type="evidence" value="ECO:0007669"/>
    <property type="project" value="UniProtKB-UniRule"/>
</dbReference>
<dbReference type="GO" id="GO:0008270">
    <property type="term" value="F:zinc ion binding"/>
    <property type="evidence" value="ECO:0007669"/>
    <property type="project" value="UniProtKB-UniRule"/>
</dbReference>
<dbReference type="GO" id="GO:0002100">
    <property type="term" value="P:tRNA wobble adenosine to inosine editing"/>
    <property type="evidence" value="ECO:0007669"/>
    <property type="project" value="UniProtKB-UniRule"/>
</dbReference>
<dbReference type="CDD" id="cd01285">
    <property type="entry name" value="nucleoside_deaminase"/>
    <property type="match status" value="1"/>
</dbReference>
<dbReference type="Gene3D" id="3.40.140.10">
    <property type="entry name" value="Cytidine Deaminase, domain 2"/>
    <property type="match status" value="1"/>
</dbReference>
<dbReference type="HAMAP" id="MF_00972">
    <property type="entry name" value="tRNA_aden_deaminase"/>
    <property type="match status" value="1"/>
</dbReference>
<dbReference type="InterPro" id="IPR016192">
    <property type="entry name" value="APOBEC/CMP_deaminase_Zn-bd"/>
</dbReference>
<dbReference type="InterPro" id="IPR002125">
    <property type="entry name" value="CMP_dCMP_dom"/>
</dbReference>
<dbReference type="InterPro" id="IPR016193">
    <property type="entry name" value="Cytidine_deaminase-like"/>
</dbReference>
<dbReference type="InterPro" id="IPR028883">
    <property type="entry name" value="tRNA_aden_deaminase"/>
</dbReference>
<dbReference type="NCBIfam" id="NF008113">
    <property type="entry name" value="PRK10860.1"/>
    <property type="match status" value="1"/>
</dbReference>
<dbReference type="PANTHER" id="PTHR11079">
    <property type="entry name" value="CYTOSINE DEAMINASE FAMILY MEMBER"/>
    <property type="match status" value="1"/>
</dbReference>
<dbReference type="PANTHER" id="PTHR11079:SF202">
    <property type="entry name" value="TRNA-SPECIFIC ADENOSINE DEAMINASE"/>
    <property type="match status" value="1"/>
</dbReference>
<dbReference type="Pfam" id="PF14437">
    <property type="entry name" value="MafB19-deam"/>
    <property type="match status" value="1"/>
</dbReference>
<dbReference type="SUPFAM" id="SSF53927">
    <property type="entry name" value="Cytidine deaminase-like"/>
    <property type="match status" value="1"/>
</dbReference>
<dbReference type="PROSITE" id="PS00903">
    <property type="entry name" value="CYT_DCMP_DEAMINASES_1"/>
    <property type="match status" value="1"/>
</dbReference>
<dbReference type="PROSITE" id="PS51747">
    <property type="entry name" value="CYT_DCMP_DEAMINASES_2"/>
    <property type="match status" value="1"/>
</dbReference>
<gene>
    <name evidence="1" type="primary">tadA</name>
    <name type="ordered locus">BUsg_246</name>
</gene>
<accession>Q8K9R4</accession>
<sequence length="151" mass="17502">MKSNRDSYWMKIALKYAYYAEENGEVPIGAILVFQEKIIGTGWNSVISQNDSTAHAEIIALREAGRNIKNYRLVNTTLYVTLQPCMMCCGAIINSRIKRLVFGASYKDLKKNPFLKKIFINLEKNKLKIKKHIMRNECAKILSNFFKNKRF</sequence>
<keyword id="KW-0378">Hydrolase</keyword>
<keyword id="KW-0479">Metal-binding</keyword>
<keyword id="KW-0819">tRNA processing</keyword>
<keyword id="KW-0862">Zinc</keyword>